<feature type="chain" id="PRO_0000382505" description="Probable cytosolic iron-sulfur protein assembly protein 1">
    <location>
        <begin position="1"/>
        <end position="438"/>
    </location>
</feature>
<feature type="repeat" description="WD 1">
    <location>
        <begin position="15"/>
        <end position="57"/>
    </location>
</feature>
<feature type="repeat" description="WD 2">
    <location>
        <begin position="61"/>
        <end position="103"/>
    </location>
</feature>
<feature type="repeat" description="WD 3">
    <location>
        <begin position="140"/>
        <end position="179"/>
    </location>
</feature>
<feature type="repeat" description="WD 4">
    <location>
        <begin position="187"/>
        <end position="226"/>
    </location>
</feature>
<feature type="repeat" description="WD 5">
    <location>
        <begin position="254"/>
        <end position="297"/>
    </location>
</feature>
<feature type="repeat" description="WD 6">
    <location>
        <begin position="327"/>
        <end position="366"/>
    </location>
</feature>
<feature type="repeat" description="WD 7">
    <location>
        <begin position="396"/>
        <end position="438"/>
    </location>
</feature>
<feature type="region of interest" description="Disordered" evidence="2">
    <location>
        <begin position="290"/>
        <end position="311"/>
    </location>
</feature>
<feature type="compositionally biased region" description="Polar residues" evidence="2">
    <location>
        <begin position="296"/>
        <end position="305"/>
    </location>
</feature>
<sequence length="438" mass="48857">MTENPTASLTLLSDLTPPSLERTWLTAPHPSLPIVATCSSDKTVRVYSLTNFRLLSTISGGHKRSVRTCAWKPHVQGESVLATGSFDATVGIWRRWDSYGRAEDGTDVRGLSSETLDGNGRDTQEYEDDEEWRFAVLLDGHDSEVKSVSWSPSGMLLATCSRDKSIWIWEDLDDGDNNFETVAVMQEHEGDVKCVAWHPVEECLASASYDNTIRLWREDIDDWGQVACIKGHTGTVWYLDWEGIGNVPSTAAVCEQGTSLSAEWKDQRAMSGPRLASCSDDRTVRIWKRRPKEQRAQSQVGSTGIPSIIRPTGTDETWEEDVLLPQIHELSIYAVAWSKRTGLLASVGADGRIVVYEELFLTSPARTPDTNTPTDTSAIIPRTHTEWVAIAILEGAHGIYEVNHVAWARRADRCRKENEEVLITTADDGSIKVWTLRR</sequence>
<organism>
    <name type="scientific">Aspergillus oryzae (strain ATCC 42149 / RIB 40)</name>
    <name type="common">Yellow koji mold</name>
    <dbReference type="NCBI Taxonomy" id="510516"/>
    <lineage>
        <taxon>Eukaryota</taxon>
        <taxon>Fungi</taxon>
        <taxon>Dikarya</taxon>
        <taxon>Ascomycota</taxon>
        <taxon>Pezizomycotina</taxon>
        <taxon>Eurotiomycetes</taxon>
        <taxon>Eurotiomycetidae</taxon>
        <taxon>Eurotiales</taxon>
        <taxon>Aspergillaceae</taxon>
        <taxon>Aspergillus</taxon>
        <taxon>Aspergillus subgen. Circumdati</taxon>
    </lineage>
</organism>
<evidence type="ECO:0000255" key="1">
    <source>
        <dbReference type="HAMAP-Rule" id="MF_03037"/>
    </source>
</evidence>
<evidence type="ECO:0000256" key="2">
    <source>
        <dbReference type="SAM" id="MobiDB-lite"/>
    </source>
</evidence>
<reference key="1">
    <citation type="journal article" date="2005" name="Nature">
        <title>Genome sequencing and analysis of Aspergillus oryzae.</title>
        <authorList>
            <person name="Machida M."/>
            <person name="Asai K."/>
            <person name="Sano M."/>
            <person name="Tanaka T."/>
            <person name="Kumagai T."/>
            <person name="Terai G."/>
            <person name="Kusumoto K."/>
            <person name="Arima T."/>
            <person name="Akita O."/>
            <person name="Kashiwagi Y."/>
            <person name="Abe K."/>
            <person name="Gomi K."/>
            <person name="Horiuchi H."/>
            <person name="Kitamoto K."/>
            <person name="Kobayashi T."/>
            <person name="Takeuchi M."/>
            <person name="Denning D.W."/>
            <person name="Galagan J.E."/>
            <person name="Nierman W.C."/>
            <person name="Yu J."/>
            <person name="Archer D.B."/>
            <person name="Bennett J.W."/>
            <person name="Bhatnagar D."/>
            <person name="Cleveland T.E."/>
            <person name="Fedorova N.D."/>
            <person name="Gotoh O."/>
            <person name="Horikawa H."/>
            <person name="Hosoyama A."/>
            <person name="Ichinomiya M."/>
            <person name="Igarashi R."/>
            <person name="Iwashita K."/>
            <person name="Juvvadi P.R."/>
            <person name="Kato M."/>
            <person name="Kato Y."/>
            <person name="Kin T."/>
            <person name="Kokubun A."/>
            <person name="Maeda H."/>
            <person name="Maeyama N."/>
            <person name="Maruyama J."/>
            <person name="Nagasaki H."/>
            <person name="Nakajima T."/>
            <person name="Oda K."/>
            <person name="Okada K."/>
            <person name="Paulsen I."/>
            <person name="Sakamoto K."/>
            <person name="Sawano T."/>
            <person name="Takahashi M."/>
            <person name="Takase K."/>
            <person name="Terabayashi Y."/>
            <person name="Wortman J.R."/>
            <person name="Yamada O."/>
            <person name="Yamagata Y."/>
            <person name="Anazawa H."/>
            <person name="Hata Y."/>
            <person name="Koide Y."/>
            <person name="Komori T."/>
            <person name="Koyama Y."/>
            <person name="Minetoki T."/>
            <person name="Suharnan S."/>
            <person name="Tanaka A."/>
            <person name="Isono K."/>
            <person name="Kuhara S."/>
            <person name="Ogasawara N."/>
            <person name="Kikuchi H."/>
        </authorList>
    </citation>
    <scope>NUCLEOTIDE SEQUENCE [LARGE SCALE GENOMIC DNA]</scope>
    <source>
        <strain>ATCC 42149 / RIB 40</strain>
    </source>
</reference>
<comment type="function">
    <text evidence="1">Essential component of the cytosolic iron-sulfur (Fe/S) protein assembly machinery. Required for the maturation of extramitochondrial Fe/S proteins.</text>
</comment>
<comment type="similarity">
    <text evidence="1">Belongs to the WD repeat CIA1 family.</text>
</comment>
<name>CIAO1_ASPOR</name>
<accession>Q2UPI0</accession>
<proteinExistence type="inferred from homology"/>
<dbReference type="EMBL" id="BA000049">
    <property type="protein sequence ID" value="BAE56535.1"/>
    <property type="molecule type" value="Genomic_DNA"/>
</dbReference>
<dbReference type="SMR" id="Q2UPI0"/>
<dbReference type="STRING" id="510516.Q2UPI0"/>
<dbReference type="EnsemblFungi" id="BAE56535">
    <property type="protein sequence ID" value="BAE56535"/>
    <property type="gene ID" value="AO090005001633"/>
</dbReference>
<dbReference type="VEuPathDB" id="FungiDB:AO090005001633"/>
<dbReference type="HOGENOM" id="CLU_000288_57_8_1"/>
<dbReference type="OMA" id="IREIRWS"/>
<dbReference type="Proteomes" id="UP000006564">
    <property type="component" value="Chromosome 1"/>
</dbReference>
<dbReference type="GO" id="GO:0097361">
    <property type="term" value="C:cytosolic [4Fe-4S] assembly targeting complex"/>
    <property type="evidence" value="ECO:0007669"/>
    <property type="project" value="InterPro"/>
</dbReference>
<dbReference type="GO" id="GO:0016226">
    <property type="term" value="P:iron-sulfur cluster assembly"/>
    <property type="evidence" value="ECO:0007669"/>
    <property type="project" value="UniProtKB-UniRule"/>
</dbReference>
<dbReference type="Gene3D" id="2.130.10.10">
    <property type="entry name" value="YVTN repeat-like/Quinoprotein amine dehydrogenase"/>
    <property type="match status" value="1"/>
</dbReference>
<dbReference type="HAMAP" id="MF_03037">
    <property type="entry name" value="ciao1"/>
    <property type="match status" value="1"/>
</dbReference>
<dbReference type="InterPro" id="IPR028608">
    <property type="entry name" value="CIAO1/Cia1"/>
</dbReference>
<dbReference type="InterPro" id="IPR020472">
    <property type="entry name" value="G-protein_beta_WD-40_rep"/>
</dbReference>
<dbReference type="InterPro" id="IPR015943">
    <property type="entry name" value="WD40/YVTN_repeat-like_dom_sf"/>
</dbReference>
<dbReference type="InterPro" id="IPR036322">
    <property type="entry name" value="WD40_repeat_dom_sf"/>
</dbReference>
<dbReference type="InterPro" id="IPR001680">
    <property type="entry name" value="WD40_rpt"/>
</dbReference>
<dbReference type="PANTHER" id="PTHR19920:SF0">
    <property type="entry name" value="CYTOSOLIC IRON-SULFUR PROTEIN ASSEMBLY PROTEIN CIAO1-RELATED"/>
    <property type="match status" value="1"/>
</dbReference>
<dbReference type="PANTHER" id="PTHR19920">
    <property type="entry name" value="WD40 PROTEIN CIAO1"/>
    <property type="match status" value="1"/>
</dbReference>
<dbReference type="Pfam" id="PF00400">
    <property type="entry name" value="WD40"/>
    <property type="match status" value="6"/>
</dbReference>
<dbReference type="PRINTS" id="PR00320">
    <property type="entry name" value="GPROTEINBRPT"/>
</dbReference>
<dbReference type="SMART" id="SM00320">
    <property type="entry name" value="WD40"/>
    <property type="match status" value="7"/>
</dbReference>
<dbReference type="SUPFAM" id="SSF50978">
    <property type="entry name" value="WD40 repeat-like"/>
    <property type="match status" value="1"/>
</dbReference>
<dbReference type="PROSITE" id="PS50082">
    <property type="entry name" value="WD_REPEATS_2"/>
    <property type="match status" value="4"/>
</dbReference>
<dbReference type="PROSITE" id="PS50294">
    <property type="entry name" value="WD_REPEATS_REGION"/>
    <property type="match status" value="2"/>
</dbReference>
<protein>
    <recommendedName>
        <fullName evidence="1">Probable cytosolic iron-sulfur protein assembly protein 1</fullName>
    </recommendedName>
</protein>
<gene>
    <name type="primary">cia1</name>
    <name type="ORF">AO090005001633</name>
</gene>
<keyword id="KW-1185">Reference proteome</keyword>
<keyword id="KW-0677">Repeat</keyword>
<keyword id="KW-0853">WD repeat</keyword>